<organism>
    <name type="scientific">Arabidopsis thaliana</name>
    <name type="common">Mouse-ear cress</name>
    <dbReference type="NCBI Taxonomy" id="3702"/>
    <lineage>
        <taxon>Eukaryota</taxon>
        <taxon>Viridiplantae</taxon>
        <taxon>Streptophyta</taxon>
        <taxon>Embryophyta</taxon>
        <taxon>Tracheophyta</taxon>
        <taxon>Spermatophyta</taxon>
        <taxon>Magnoliopsida</taxon>
        <taxon>eudicotyledons</taxon>
        <taxon>Gunneridae</taxon>
        <taxon>Pentapetalae</taxon>
        <taxon>rosids</taxon>
        <taxon>malvids</taxon>
        <taxon>Brassicales</taxon>
        <taxon>Brassicaceae</taxon>
        <taxon>Camelineae</taxon>
        <taxon>Arabidopsis</taxon>
    </lineage>
</organism>
<accession>Q9LQ92</accession>
<comment type="function">
    <text evidence="1">Functions as an E3 ubiquitin ligase.</text>
</comment>
<comment type="catalytic activity">
    <reaction>
        <text>S-ubiquitinyl-[E2 ubiquitin-conjugating enzyme]-L-cysteine + [acceptor protein]-L-lysine = [E2 ubiquitin-conjugating enzyme]-L-cysteine + N(6)-ubiquitinyl-[acceptor protein]-L-lysine.</text>
        <dbReference type="EC" id="2.3.2.27"/>
    </reaction>
</comment>
<comment type="pathway">
    <text>Protein modification; protein ubiquitination.</text>
</comment>
<evidence type="ECO:0000250" key="1"/>
<evidence type="ECO:0000256" key="2">
    <source>
        <dbReference type="SAM" id="MobiDB-lite"/>
    </source>
</evidence>
<evidence type="ECO:0000305" key="3"/>
<sequence length="308" mass="35392">MEDAIYVAVNQDVRESKKTLLWALKNLQVKKIFLLHVHLPFSLTTSSSRLEQSEIDAIQDSELNTSVNSLYKYRDICINKGVNEKDVDTSMISGHDVGEGIVELIYQNIITNLVMGAAADPHYSRGMSITSRKAEYVSQHAPHSCKIWFICKGKLIKQRERSFYLGNPSDSFSEFSTSAEKPISKGRRRDEEEEPESPKEHPGWILEPEESPKKGRKETIEKSKSNESDEDPRLEDFKCPISMEIMRDPHVAADGFTYEAEEFRKWLRSGGRTSPKTNKPLENHNLVPNHTLRIIIKDWLEKNPNYKR</sequence>
<feature type="chain" id="PRO_0000322189" description="U-box domain-containing protein 54">
    <location>
        <begin position="1"/>
        <end position="308"/>
    </location>
</feature>
<feature type="domain" description="U-box">
    <location>
        <begin position="232"/>
        <end position="306"/>
    </location>
</feature>
<feature type="region of interest" description="Disordered" evidence="2">
    <location>
        <begin position="172"/>
        <end position="235"/>
    </location>
</feature>
<feature type="compositionally biased region" description="Basic and acidic residues" evidence="2">
    <location>
        <begin position="210"/>
        <end position="227"/>
    </location>
</feature>
<keyword id="KW-1185">Reference proteome</keyword>
<keyword id="KW-0808">Transferase</keyword>
<keyword id="KW-0833">Ubl conjugation pathway</keyword>
<reference key="1">
    <citation type="journal article" date="2000" name="Nature">
        <title>Sequence and analysis of chromosome 1 of the plant Arabidopsis thaliana.</title>
        <authorList>
            <person name="Theologis A."/>
            <person name="Ecker J.R."/>
            <person name="Palm C.J."/>
            <person name="Federspiel N.A."/>
            <person name="Kaul S."/>
            <person name="White O."/>
            <person name="Alonso J."/>
            <person name="Altafi H."/>
            <person name="Araujo R."/>
            <person name="Bowman C.L."/>
            <person name="Brooks S.Y."/>
            <person name="Buehler E."/>
            <person name="Chan A."/>
            <person name="Chao Q."/>
            <person name="Chen H."/>
            <person name="Cheuk R.F."/>
            <person name="Chin C.W."/>
            <person name="Chung M.K."/>
            <person name="Conn L."/>
            <person name="Conway A.B."/>
            <person name="Conway A.R."/>
            <person name="Creasy T.H."/>
            <person name="Dewar K."/>
            <person name="Dunn P."/>
            <person name="Etgu P."/>
            <person name="Feldblyum T.V."/>
            <person name="Feng J.-D."/>
            <person name="Fong B."/>
            <person name="Fujii C.Y."/>
            <person name="Gill J.E."/>
            <person name="Goldsmith A.D."/>
            <person name="Haas B."/>
            <person name="Hansen N.F."/>
            <person name="Hughes B."/>
            <person name="Huizar L."/>
            <person name="Hunter J.L."/>
            <person name="Jenkins J."/>
            <person name="Johnson-Hopson C."/>
            <person name="Khan S."/>
            <person name="Khaykin E."/>
            <person name="Kim C.J."/>
            <person name="Koo H.L."/>
            <person name="Kremenetskaia I."/>
            <person name="Kurtz D.B."/>
            <person name="Kwan A."/>
            <person name="Lam B."/>
            <person name="Langin-Hooper S."/>
            <person name="Lee A."/>
            <person name="Lee J.M."/>
            <person name="Lenz C.A."/>
            <person name="Li J.H."/>
            <person name="Li Y.-P."/>
            <person name="Lin X."/>
            <person name="Liu S.X."/>
            <person name="Liu Z.A."/>
            <person name="Luros J.S."/>
            <person name="Maiti R."/>
            <person name="Marziali A."/>
            <person name="Militscher J."/>
            <person name="Miranda M."/>
            <person name="Nguyen M."/>
            <person name="Nierman W.C."/>
            <person name="Osborne B.I."/>
            <person name="Pai G."/>
            <person name="Peterson J."/>
            <person name="Pham P.K."/>
            <person name="Rizzo M."/>
            <person name="Rooney T."/>
            <person name="Rowley D."/>
            <person name="Sakano H."/>
            <person name="Salzberg S.L."/>
            <person name="Schwartz J.R."/>
            <person name="Shinn P."/>
            <person name="Southwick A.M."/>
            <person name="Sun H."/>
            <person name="Tallon L.J."/>
            <person name="Tambunga G."/>
            <person name="Toriumi M.J."/>
            <person name="Town C.D."/>
            <person name="Utterback T."/>
            <person name="Van Aken S."/>
            <person name="Vaysberg M."/>
            <person name="Vysotskaia V.S."/>
            <person name="Walker M."/>
            <person name="Wu D."/>
            <person name="Yu G."/>
            <person name="Fraser C.M."/>
            <person name="Venter J.C."/>
            <person name="Davis R.W."/>
        </authorList>
    </citation>
    <scope>NUCLEOTIDE SEQUENCE [LARGE SCALE GENOMIC DNA]</scope>
    <source>
        <strain>cv. Columbia</strain>
    </source>
</reference>
<reference key="2">
    <citation type="journal article" date="2017" name="Plant J.">
        <title>Araport11: a complete reannotation of the Arabidopsis thaliana reference genome.</title>
        <authorList>
            <person name="Cheng C.Y."/>
            <person name="Krishnakumar V."/>
            <person name="Chan A.P."/>
            <person name="Thibaud-Nissen F."/>
            <person name="Schobel S."/>
            <person name="Town C.D."/>
        </authorList>
    </citation>
    <scope>GENOME REANNOTATION</scope>
    <source>
        <strain>cv. Columbia</strain>
    </source>
</reference>
<name>PUB54_ARATH</name>
<gene>
    <name type="primary">PUB54</name>
    <name type="ordered locus">At1g01680</name>
    <name type="ORF">T1N6.5</name>
</gene>
<protein>
    <recommendedName>
        <fullName>U-box domain-containing protein 54</fullName>
        <ecNumber>2.3.2.27</ecNumber>
    </recommendedName>
    <alternativeName>
        <fullName>Plant U-box protein 54</fullName>
    </alternativeName>
    <alternativeName>
        <fullName evidence="3">RING-type E3 ubiquitin transferase PUB54</fullName>
    </alternativeName>
</protein>
<dbReference type="EC" id="2.3.2.27"/>
<dbReference type="EMBL" id="AC009273">
    <property type="protein sequence ID" value="AAF78398.1"/>
    <property type="molecule type" value="Genomic_DNA"/>
</dbReference>
<dbReference type="EMBL" id="CP002684">
    <property type="protein sequence ID" value="AEE27321.1"/>
    <property type="molecule type" value="Genomic_DNA"/>
</dbReference>
<dbReference type="PIR" id="F86147">
    <property type="entry name" value="F86147"/>
</dbReference>
<dbReference type="RefSeq" id="NP_171674.2">
    <property type="nucleotide sequence ID" value="NM_100050.4"/>
</dbReference>
<dbReference type="SMR" id="Q9LQ92"/>
<dbReference type="STRING" id="3702.Q9LQ92"/>
<dbReference type="PaxDb" id="3702-AT1G01680.1"/>
<dbReference type="ProteomicsDB" id="226112"/>
<dbReference type="EnsemblPlants" id="AT1G01680.1">
    <property type="protein sequence ID" value="AT1G01680.1"/>
    <property type="gene ID" value="AT1G01680"/>
</dbReference>
<dbReference type="GeneID" id="839251"/>
<dbReference type="Gramene" id="AT1G01680.1">
    <property type="protein sequence ID" value="AT1G01680.1"/>
    <property type="gene ID" value="AT1G01680"/>
</dbReference>
<dbReference type="KEGG" id="ath:AT1G01680"/>
<dbReference type="Araport" id="AT1G01680"/>
<dbReference type="TAIR" id="AT1G01680">
    <property type="gene designation" value="PUB54"/>
</dbReference>
<dbReference type="HOGENOM" id="CLU_1066901_0_0_1"/>
<dbReference type="InParanoid" id="Q9LQ92"/>
<dbReference type="OMA" id="LEDFKCP"/>
<dbReference type="PhylomeDB" id="Q9LQ92"/>
<dbReference type="BRENDA" id="2.3.2.27">
    <property type="organism ID" value="399"/>
</dbReference>
<dbReference type="UniPathway" id="UPA00143"/>
<dbReference type="PRO" id="PR:Q9LQ92"/>
<dbReference type="Proteomes" id="UP000006548">
    <property type="component" value="Chromosome 1"/>
</dbReference>
<dbReference type="ExpressionAtlas" id="Q9LQ92">
    <property type="expression patterns" value="baseline and differential"/>
</dbReference>
<dbReference type="GO" id="GO:0004842">
    <property type="term" value="F:ubiquitin-protein transferase activity"/>
    <property type="evidence" value="ECO:0007669"/>
    <property type="project" value="InterPro"/>
</dbReference>
<dbReference type="GO" id="GO:0016567">
    <property type="term" value="P:protein ubiquitination"/>
    <property type="evidence" value="ECO:0007669"/>
    <property type="project" value="UniProtKB-UniPathway"/>
</dbReference>
<dbReference type="CDD" id="cd16655">
    <property type="entry name" value="RING-Ubox_WDSUB1-like"/>
    <property type="match status" value="1"/>
</dbReference>
<dbReference type="CDD" id="cd01989">
    <property type="entry name" value="USP_STK_Ubox_N"/>
    <property type="match status" value="1"/>
</dbReference>
<dbReference type="FunFam" id="3.30.40.10:FF:000428">
    <property type="entry name" value="U-box domain-containing protein 54"/>
    <property type="match status" value="1"/>
</dbReference>
<dbReference type="FunFam" id="3.40.50.620:FF:000490">
    <property type="entry name" value="U-box domain-containing protein 54"/>
    <property type="match status" value="1"/>
</dbReference>
<dbReference type="Gene3D" id="3.40.50.620">
    <property type="entry name" value="HUPs"/>
    <property type="match status" value="1"/>
</dbReference>
<dbReference type="Gene3D" id="3.30.40.10">
    <property type="entry name" value="Zinc/RING finger domain, C3HC4 (zinc finger)"/>
    <property type="match status" value="1"/>
</dbReference>
<dbReference type="InterPro" id="IPR014729">
    <property type="entry name" value="Rossmann-like_a/b/a_fold"/>
</dbReference>
<dbReference type="InterPro" id="IPR051348">
    <property type="entry name" value="U-box_ubiquitin_ligases"/>
</dbReference>
<dbReference type="InterPro" id="IPR003613">
    <property type="entry name" value="Ubox_domain"/>
</dbReference>
<dbReference type="InterPro" id="IPR013083">
    <property type="entry name" value="Znf_RING/FYVE/PHD"/>
</dbReference>
<dbReference type="PANTHER" id="PTHR45647">
    <property type="entry name" value="OS02G0152300 PROTEIN"/>
    <property type="match status" value="1"/>
</dbReference>
<dbReference type="PANTHER" id="PTHR45647:SF100">
    <property type="entry name" value="U-BOX DOMAIN-CONTAINING PROTEIN 33"/>
    <property type="match status" value="1"/>
</dbReference>
<dbReference type="Pfam" id="PF04564">
    <property type="entry name" value="U-box"/>
    <property type="match status" value="1"/>
</dbReference>
<dbReference type="SMART" id="SM00504">
    <property type="entry name" value="Ubox"/>
    <property type="match status" value="1"/>
</dbReference>
<dbReference type="SUPFAM" id="SSF57850">
    <property type="entry name" value="RING/U-box"/>
    <property type="match status" value="1"/>
</dbReference>
<dbReference type="PROSITE" id="PS51698">
    <property type="entry name" value="U_BOX"/>
    <property type="match status" value="1"/>
</dbReference>
<proteinExistence type="evidence at transcript level"/>